<proteinExistence type="inferred from homology"/>
<keyword id="KW-0413">Isomerase</keyword>
<keyword id="KW-1185">Reference proteome</keyword>
<keyword id="KW-0819">tRNA processing</keyword>
<evidence type="ECO:0000255" key="1">
    <source>
        <dbReference type="HAMAP-Rule" id="MF_01082"/>
    </source>
</evidence>
<dbReference type="EC" id="5.4.99.27" evidence="1"/>
<dbReference type="EMBL" id="AE014075">
    <property type="protein sequence ID" value="AAN81761.1"/>
    <property type="molecule type" value="Genomic_DNA"/>
</dbReference>
<dbReference type="RefSeq" id="WP_000568929.1">
    <property type="nucleotide sequence ID" value="NZ_CP051263.1"/>
</dbReference>
<dbReference type="SMR" id="Q8FEJ7"/>
<dbReference type="STRING" id="199310.c3312"/>
<dbReference type="KEGG" id="ecc:c3312"/>
<dbReference type="eggNOG" id="COG0585">
    <property type="taxonomic scope" value="Bacteria"/>
</dbReference>
<dbReference type="HOGENOM" id="CLU_005281_4_0_6"/>
<dbReference type="BioCyc" id="ECOL199310:C3312-MONOMER"/>
<dbReference type="Proteomes" id="UP000001410">
    <property type="component" value="Chromosome"/>
</dbReference>
<dbReference type="GO" id="GO:0005829">
    <property type="term" value="C:cytosol"/>
    <property type="evidence" value="ECO:0007669"/>
    <property type="project" value="TreeGrafter"/>
</dbReference>
<dbReference type="GO" id="GO:0003723">
    <property type="term" value="F:RNA binding"/>
    <property type="evidence" value="ECO:0007669"/>
    <property type="project" value="InterPro"/>
</dbReference>
<dbReference type="GO" id="GO:0160150">
    <property type="term" value="F:tRNA pseudouridine(13) synthase activity"/>
    <property type="evidence" value="ECO:0007669"/>
    <property type="project" value="UniProtKB-EC"/>
</dbReference>
<dbReference type="GO" id="GO:0031119">
    <property type="term" value="P:tRNA pseudouridine synthesis"/>
    <property type="evidence" value="ECO:0007669"/>
    <property type="project" value="UniProtKB-UniRule"/>
</dbReference>
<dbReference type="CDD" id="cd02575">
    <property type="entry name" value="PseudoU_synth_EcTruD"/>
    <property type="match status" value="1"/>
</dbReference>
<dbReference type="FunFam" id="3.30.2340.10:FF:000001">
    <property type="entry name" value="tRNA pseudouridine synthase D"/>
    <property type="match status" value="1"/>
</dbReference>
<dbReference type="FunFam" id="3.30.2350.20:FF:000001">
    <property type="entry name" value="tRNA pseudouridine synthase D"/>
    <property type="match status" value="1"/>
</dbReference>
<dbReference type="Gene3D" id="3.30.2350.20">
    <property type="entry name" value="TruD, catalytic domain"/>
    <property type="match status" value="1"/>
</dbReference>
<dbReference type="Gene3D" id="3.30.2340.10">
    <property type="entry name" value="TruD, insertion domain"/>
    <property type="match status" value="1"/>
</dbReference>
<dbReference type="HAMAP" id="MF_01082">
    <property type="entry name" value="TruD"/>
    <property type="match status" value="1"/>
</dbReference>
<dbReference type="InterPro" id="IPR020103">
    <property type="entry name" value="PsdUridine_synth_cat_dom_sf"/>
</dbReference>
<dbReference type="InterPro" id="IPR001656">
    <property type="entry name" value="PsdUridine_synth_TruD"/>
</dbReference>
<dbReference type="InterPro" id="IPR020119">
    <property type="entry name" value="PsdUridine_synth_TruD_CS"/>
</dbReference>
<dbReference type="InterPro" id="IPR011760">
    <property type="entry name" value="PsdUridine_synth_TruD_insert"/>
</dbReference>
<dbReference type="InterPro" id="IPR042214">
    <property type="entry name" value="TruD_catalytic"/>
</dbReference>
<dbReference type="InterPro" id="IPR043165">
    <property type="entry name" value="TruD_insert_sf"/>
</dbReference>
<dbReference type="InterPro" id="IPR050170">
    <property type="entry name" value="TruD_pseudoU_synthase"/>
</dbReference>
<dbReference type="NCBIfam" id="NF002155">
    <property type="entry name" value="PRK00984.1-4"/>
    <property type="match status" value="1"/>
</dbReference>
<dbReference type="NCBIfam" id="TIGR00094">
    <property type="entry name" value="tRNA_TruD_broad"/>
    <property type="match status" value="1"/>
</dbReference>
<dbReference type="PANTHER" id="PTHR47811">
    <property type="entry name" value="TRNA PSEUDOURIDINE SYNTHASE D"/>
    <property type="match status" value="1"/>
</dbReference>
<dbReference type="PANTHER" id="PTHR47811:SF1">
    <property type="entry name" value="TRNA PSEUDOURIDINE SYNTHASE D"/>
    <property type="match status" value="1"/>
</dbReference>
<dbReference type="Pfam" id="PF01142">
    <property type="entry name" value="TruD"/>
    <property type="match status" value="2"/>
</dbReference>
<dbReference type="SUPFAM" id="SSF55120">
    <property type="entry name" value="Pseudouridine synthase"/>
    <property type="match status" value="1"/>
</dbReference>
<dbReference type="PROSITE" id="PS50984">
    <property type="entry name" value="TRUD"/>
    <property type="match status" value="1"/>
</dbReference>
<dbReference type="PROSITE" id="PS01268">
    <property type="entry name" value="UPF0024"/>
    <property type="match status" value="1"/>
</dbReference>
<comment type="function">
    <text evidence="1">Responsible for synthesis of pseudouridine from uracil-13 in transfer RNAs.</text>
</comment>
<comment type="catalytic activity">
    <reaction evidence="1">
        <text>uridine(13) in tRNA = pseudouridine(13) in tRNA</text>
        <dbReference type="Rhea" id="RHEA:42540"/>
        <dbReference type="Rhea" id="RHEA-COMP:10105"/>
        <dbReference type="Rhea" id="RHEA-COMP:10106"/>
        <dbReference type="ChEBI" id="CHEBI:65314"/>
        <dbReference type="ChEBI" id="CHEBI:65315"/>
        <dbReference type="EC" id="5.4.99.27"/>
    </reaction>
</comment>
<comment type="similarity">
    <text evidence="1">Belongs to the pseudouridine synthase TruD family.</text>
</comment>
<name>TRUD_ECOL6</name>
<organism>
    <name type="scientific">Escherichia coli O6:H1 (strain CFT073 / ATCC 700928 / UPEC)</name>
    <dbReference type="NCBI Taxonomy" id="199310"/>
    <lineage>
        <taxon>Bacteria</taxon>
        <taxon>Pseudomonadati</taxon>
        <taxon>Pseudomonadota</taxon>
        <taxon>Gammaproteobacteria</taxon>
        <taxon>Enterobacterales</taxon>
        <taxon>Enterobacteriaceae</taxon>
        <taxon>Escherichia</taxon>
    </lineage>
</organism>
<feature type="chain" id="PRO_0000152496" description="tRNA pseudouridine synthase D">
    <location>
        <begin position="1"/>
        <end position="349"/>
    </location>
</feature>
<feature type="domain" description="TRUD" evidence="1">
    <location>
        <begin position="155"/>
        <end position="303"/>
    </location>
</feature>
<feature type="active site" description="Nucleophile" evidence="1">
    <location>
        <position position="80"/>
    </location>
</feature>
<feature type="binding site" evidence="1">
    <location>
        <position position="27"/>
    </location>
    <ligand>
        <name>substrate</name>
    </ligand>
</feature>
<feature type="binding site" evidence="1">
    <location>
        <position position="129"/>
    </location>
    <ligand>
        <name>substrate</name>
    </ligand>
</feature>
<feature type="binding site" evidence="1">
    <location>
        <position position="329"/>
    </location>
    <ligand>
        <name>substrate</name>
    </ligand>
</feature>
<sequence length="349" mass="39165">MIEFDNLTYLHGKPQGTGLLKANPEDFVVVEDLGFEPDGEGEHILVRILKNGCNTRFVADALAKFLKIHAREVSFAGQKDKHAVTEQWLCARVPGKEMPDLSAFQLEGCQVLEYARHKRKLRLGALKGNAFTLVLREVSNRDDVEQRLIDICVKGVPNYFGAQRFGIGGSNLQGALRWAQTNTPVRDRNKRSFWLSAARSALFNQIVAERLKKADVNQVVDGDALQLAGRGSWFVATTEELAELQRRVNDKELMITAALPGSGEWGTQREALAFEQAAVAEETELQTLLVREKVEAARRAMLLYPQQLSWNWWDDVTVEIRFWLPAGSFATSVVRELINTTGDYAHIAE</sequence>
<reference key="1">
    <citation type="journal article" date="2002" name="Proc. Natl. Acad. Sci. U.S.A.">
        <title>Extensive mosaic structure revealed by the complete genome sequence of uropathogenic Escherichia coli.</title>
        <authorList>
            <person name="Welch R.A."/>
            <person name="Burland V."/>
            <person name="Plunkett G. III"/>
            <person name="Redford P."/>
            <person name="Roesch P."/>
            <person name="Rasko D."/>
            <person name="Buckles E.L."/>
            <person name="Liou S.-R."/>
            <person name="Boutin A."/>
            <person name="Hackett J."/>
            <person name="Stroud D."/>
            <person name="Mayhew G.F."/>
            <person name="Rose D.J."/>
            <person name="Zhou S."/>
            <person name="Schwartz D.C."/>
            <person name="Perna N.T."/>
            <person name="Mobley H.L.T."/>
            <person name="Donnenberg M.S."/>
            <person name="Blattner F.R."/>
        </authorList>
    </citation>
    <scope>NUCLEOTIDE SEQUENCE [LARGE SCALE GENOMIC DNA]</scope>
    <source>
        <strain>CFT073 / ATCC 700928 / UPEC</strain>
    </source>
</reference>
<accession>Q8FEJ7</accession>
<protein>
    <recommendedName>
        <fullName evidence="1">tRNA pseudouridine synthase D</fullName>
        <ecNumber evidence="1">5.4.99.27</ecNumber>
    </recommendedName>
    <alternativeName>
        <fullName evidence="1">tRNA pseudouridine(13) synthase</fullName>
    </alternativeName>
    <alternativeName>
        <fullName evidence="1">tRNA pseudouridylate synthase D</fullName>
    </alternativeName>
    <alternativeName>
        <fullName evidence="1">tRNA-uridine isomerase D</fullName>
    </alternativeName>
</protein>
<gene>
    <name evidence="1" type="primary">truD</name>
    <name type="ordered locus">c3312</name>
</gene>